<accession>P0CAB3</accession>
<organismHost>
    <name type="scientific">Ornithodoros</name>
    <name type="common">relapsing fever ticks</name>
    <dbReference type="NCBI Taxonomy" id="6937"/>
</organismHost>
<organismHost>
    <name type="scientific">Phacochoerus aethiopicus</name>
    <name type="common">Warthog</name>
    <dbReference type="NCBI Taxonomy" id="85517"/>
</organismHost>
<organismHost>
    <name type="scientific">Phacochoerus africanus</name>
    <name type="common">Warthog</name>
    <dbReference type="NCBI Taxonomy" id="41426"/>
</organismHost>
<organismHost>
    <name type="scientific">Potamochoerus larvatus</name>
    <name type="common">Bushpig</name>
    <dbReference type="NCBI Taxonomy" id="273792"/>
</organismHost>
<organismHost>
    <name type="scientific">Sus scrofa</name>
    <name type="common">Pig</name>
    <dbReference type="NCBI Taxonomy" id="9823"/>
</organismHost>
<dbReference type="EMBL" id="AY261360">
    <property type="status" value="NOT_ANNOTATED_CDS"/>
    <property type="molecule type" value="Genomic_DNA"/>
</dbReference>
<dbReference type="SMR" id="P0CAB3"/>
<dbReference type="Proteomes" id="UP000000861">
    <property type="component" value="Segment"/>
</dbReference>
<dbReference type="GO" id="GO:0030430">
    <property type="term" value="C:host cell cytoplasm"/>
    <property type="evidence" value="ECO:0007669"/>
    <property type="project" value="UniProtKB-SubCell"/>
</dbReference>
<dbReference type="GO" id="GO:0044423">
    <property type="term" value="C:virion component"/>
    <property type="evidence" value="ECO:0007669"/>
    <property type="project" value="UniProtKB-KW"/>
</dbReference>
<dbReference type="GO" id="GO:0039548">
    <property type="term" value="P:symbiont-mediated suppression of host cytoplasmic pattern recognition receptor signaling pathway via inhibition of IRF3 activity"/>
    <property type="evidence" value="ECO:0007669"/>
    <property type="project" value="UniProtKB-KW"/>
</dbReference>
<name>M1249_ASFK5</name>
<proteinExistence type="inferred from homology"/>
<reference key="1">
    <citation type="submission" date="2003-03" db="EMBL/GenBank/DDBJ databases">
        <title>African swine fever virus genomes.</title>
        <authorList>
            <person name="Kutish G.F."/>
            <person name="Rock D.L."/>
        </authorList>
    </citation>
    <scope>NUCLEOTIDE SEQUENCE [LARGE SCALE GENOMIC DNA]</scope>
</reference>
<keyword id="KW-1035">Host cytoplasm</keyword>
<keyword id="KW-0945">Host-virus interaction</keyword>
<keyword id="KW-1090">Inhibition of host innate immune response by virus</keyword>
<keyword id="KW-1092">Inhibition of host IRF3 by virus</keyword>
<keyword id="KW-1113">Inhibition of host RLR pathway by virus</keyword>
<keyword id="KW-0426">Late protein</keyword>
<keyword id="KW-0899">Viral immunoevasion</keyword>
<keyword id="KW-0946">Virion</keyword>
<gene>
    <name type="ordered locus">Ken-072</name>
</gene>
<comment type="function">
    <text evidence="1">Together with the penton and the other minor capsid proteins (p17, p49), forms a complicated network immediately below the outer capsid shell, stabilizing the whole capsid. In addition, blocks IFN-beta transactivation mediated by the cGAS-STING pathway and regulates the transcriptional activity of IFN-beta. Mechanistically, suppresses the phosphorylation of host key adapter protein TBK1 and degrades host IRF3 in the cytoplasm.</text>
</comment>
<comment type="subunit">
    <text evidence="1">Interacts with the minor capsid protein p17 and with the hexon capsid protein p72 capsomers; these interactions form a rigid zipper structure that stabilizes the capsomers. Interacts with host IRF3.</text>
</comment>
<comment type="subcellular location">
    <subcellularLocation>
        <location evidence="1">Virion</location>
    </subcellularLocation>
    <subcellularLocation>
        <location evidence="1">Host cytoplasm</location>
    </subcellularLocation>
</comment>
<comment type="induction">
    <text evidence="2">Expressed in the late phase of the viral replicative cycle.</text>
</comment>
<comment type="similarity">
    <text evidence="2">Belongs to the asfivirus M1249L family.</text>
</comment>
<evidence type="ECO:0000250" key="1">
    <source>
        <dbReference type="UniProtKB" id="Q65152"/>
    </source>
</evidence>
<evidence type="ECO:0000305" key="2"/>
<sequence length="1250" mass="144459">MEEVITIAQIVHRGTDILSLNNEEIEALVDEIYSTLKGSNDIKNIRLIDFLFSLKDFVNHVRAEQSKLPDLSMPMEAYIRQLLVNPDVVPIVSEKKKELRVRPSTRKEIFLINGTHLAVPAEVPIEIYGLKLRLKTFSPQCFMRMAEIGSFSPETLGYVASGANLTNFIRVFMKCVDQETWKKNGEGVVVTTKENIIQFTHQYIELYKFLRSGGHSWLINRLAEEMVHRKLDRENQGSHISSIIETEEVEPEEENIKRVIFFLKELSTMYSVFPVFTSGYMPLLYDLYRAGYLEVLWNPVEQKFLQHAEQREKEQMILQQVDMKLTEVTTQARQYFKIMEEKIGRVQSDTIREILTMEGKVDDPSSILQEVIKACGKQEAELITTEYLNIKKQWELQEKNACAHLKLVKQLRSGLQYAESLKVLESIRVLYKEKNNTTNWNLCKACGFKLLCPHVDMLIQLQAAEASYDTMRTKLMKFSGINKEKENNQGLIYSYFCKICGEELAHFIQEDRTADVGVIGDLNSKLRIFIWQETMKACTFIHFGKLVDVKQFANIAVNVCLPLIYSIENIKKEEDYDPLTQLYAVIYIYAYILNLIYSSQKNKEFLTITIHGMKADSSLNAYVTFLLEKMTQQYSGIINQLSEITDQWIANNFREAFKKIIHQNGLQGLSVQDDTKVLLTEILLDPLYDYAATVARIDGSIPMHKPRTPKEAEYEFKTVIGRTPAELLSQKEFYDKIYTSKYRPDFTQLARLNDVYFQEESLRVWWGGRDEEKISTLIYLRAYELFLKYLQNAPNFNSELAEFKKYENAYGEQKALLAQQGFYNIFDPNTGKADQRTRLFEYKKLPISTLYDEKGLPHKWTIYVYKAIDSSQKPAEIEVSRKDVIKKIDNHYALADLRCSVCHVLQHEVGQLNIKKVQTALKASLEFNTFYAFYESRCPKGGLHDFQDKKCIKCGLFTYIIYDHLSQPELVHDYYNNYKDQYEKEKMSIHSIQIKKDIAVPPTETQPKPQQKPWTFDYGKIIKTAKILDISPAVVEAIGAMEGRSYADIKEGQGAPPPPTSMDDPRLMAVDSAVRIFLYNYNCLRHISTFNKPPMHIERLVKHLSYEEKEDLEKVLPNVVNEYHTTFKQLRVTDPASALLYSIEFLCISFLTLYEIKEPSWVVNIVREFALTELNTIIQSEKLLSKPGAFNFMIFGEDFVCSGEDSSMDDISAYSSPGLFGEDIIDRLDDPFSIEDVDISLDVLDNLAPQ</sequence>
<organism>
    <name type="scientific">African swine fever virus (isolate Pig/Kenya/KEN-50/1950)</name>
    <name type="common">ASFV</name>
    <dbReference type="NCBI Taxonomy" id="561445"/>
    <lineage>
        <taxon>Viruses</taxon>
        <taxon>Varidnaviria</taxon>
        <taxon>Bamfordvirae</taxon>
        <taxon>Nucleocytoviricota</taxon>
        <taxon>Pokkesviricetes</taxon>
        <taxon>Asfuvirales</taxon>
        <taxon>Asfarviridae</taxon>
        <taxon>Asfivirus</taxon>
        <taxon>African swine fever virus</taxon>
    </lineage>
</organism>
<feature type="chain" id="PRO_0000373610" description="Minor capsid protein M1249L">
    <location>
        <begin position="1"/>
        <end position="1250"/>
    </location>
</feature>
<protein>
    <recommendedName>
        <fullName evidence="1">Minor capsid protein M1249L</fullName>
        <shortName>pM1249L</shortName>
    </recommendedName>
</protein>